<dbReference type="PIR" id="A00241">
    <property type="entry name" value="FEEQ2"/>
</dbReference>
<dbReference type="SMR" id="P00236"/>
<dbReference type="GO" id="GO:0009507">
    <property type="term" value="C:chloroplast"/>
    <property type="evidence" value="ECO:0007669"/>
    <property type="project" value="UniProtKB-SubCell"/>
</dbReference>
<dbReference type="GO" id="GO:0051537">
    <property type="term" value="F:2 iron, 2 sulfur cluster binding"/>
    <property type="evidence" value="ECO:0007669"/>
    <property type="project" value="UniProtKB-KW"/>
</dbReference>
<dbReference type="GO" id="GO:0009055">
    <property type="term" value="F:electron transfer activity"/>
    <property type="evidence" value="ECO:0007669"/>
    <property type="project" value="InterPro"/>
</dbReference>
<dbReference type="GO" id="GO:0046872">
    <property type="term" value="F:metal ion binding"/>
    <property type="evidence" value="ECO:0007669"/>
    <property type="project" value="UniProtKB-KW"/>
</dbReference>
<dbReference type="GO" id="GO:0022900">
    <property type="term" value="P:electron transport chain"/>
    <property type="evidence" value="ECO:0007669"/>
    <property type="project" value="InterPro"/>
</dbReference>
<dbReference type="CDD" id="cd00207">
    <property type="entry name" value="fer2"/>
    <property type="match status" value="1"/>
</dbReference>
<dbReference type="Gene3D" id="3.10.20.30">
    <property type="match status" value="1"/>
</dbReference>
<dbReference type="InterPro" id="IPR036010">
    <property type="entry name" value="2Fe-2S_ferredoxin-like_sf"/>
</dbReference>
<dbReference type="InterPro" id="IPR001041">
    <property type="entry name" value="2Fe-2S_ferredoxin-type"/>
</dbReference>
<dbReference type="InterPro" id="IPR006058">
    <property type="entry name" value="2Fe2S_fd_BS"/>
</dbReference>
<dbReference type="InterPro" id="IPR012675">
    <property type="entry name" value="Beta-grasp_dom_sf"/>
</dbReference>
<dbReference type="InterPro" id="IPR010241">
    <property type="entry name" value="Fd_pln"/>
</dbReference>
<dbReference type="NCBIfam" id="TIGR02008">
    <property type="entry name" value="fdx_plant"/>
    <property type="match status" value="1"/>
</dbReference>
<dbReference type="PANTHER" id="PTHR43112">
    <property type="entry name" value="FERREDOXIN"/>
    <property type="match status" value="1"/>
</dbReference>
<dbReference type="PANTHER" id="PTHR43112:SF3">
    <property type="entry name" value="FERREDOXIN-2, CHLOROPLASTIC"/>
    <property type="match status" value="1"/>
</dbReference>
<dbReference type="Pfam" id="PF00111">
    <property type="entry name" value="Fer2"/>
    <property type="match status" value="1"/>
</dbReference>
<dbReference type="SUPFAM" id="SSF54292">
    <property type="entry name" value="2Fe-2S ferredoxin-like"/>
    <property type="match status" value="1"/>
</dbReference>
<dbReference type="PROSITE" id="PS00197">
    <property type="entry name" value="2FE2S_FER_1"/>
    <property type="match status" value="1"/>
</dbReference>
<dbReference type="PROSITE" id="PS51085">
    <property type="entry name" value="2FE2S_FER_2"/>
    <property type="match status" value="1"/>
</dbReference>
<name>FER2_EQUTE</name>
<keyword id="KW-0001">2Fe-2S</keyword>
<keyword id="KW-0150">Chloroplast</keyword>
<keyword id="KW-0903">Direct protein sequencing</keyword>
<keyword id="KW-0249">Electron transport</keyword>
<keyword id="KW-0408">Iron</keyword>
<keyword id="KW-0411">Iron-sulfur</keyword>
<keyword id="KW-0479">Metal-binding</keyword>
<keyword id="KW-0934">Plastid</keyword>
<keyword id="KW-0813">Transport</keyword>
<reference key="1">
    <citation type="journal article" date="1977" name="J. Biochem.">
        <title>Horsetail (Equisetum telmateia) ferredoxins I and II. Amino acid sequences.</title>
        <authorList>
            <person name="Hase T."/>
            <person name="Wada K."/>
            <person name="Matsubara H."/>
        </authorList>
    </citation>
    <scope>PROTEIN SEQUENCE</scope>
</reference>
<evidence type="ECO:0000255" key="1">
    <source>
        <dbReference type="PROSITE-ProRule" id="PRU00465"/>
    </source>
</evidence>
<evidence type="ECO:0000305" key="2"/>
<accession>P00236</accession>
<protein>
    <recommendedName>
        <fullName>Ferredoxin-2</fullName>
    </recommendedName>
    <alternativeName>
        <fullName>Ferredoxin II</fullName>
    </alternativeName>
</protein>
<sequence>AYKVTLKTPDGDITFDVEPGERLIDIASEKADLPLSCQAGACSTCLGKIVSGTVDQSEGSFLDDEQIEQGYVLTCIAIPESDVVIETHKEDEL</sequence>
<comment type="function">
    <text>Ferredoxins are iron-sulfur proteins that transfer electrons in a wide variety of metabolic reactions.</text>
</comment>
<comment type="cofactor">
    <cofactor>
        <name>[2Fe-2S] cluster</name>
        <dbReference type="ChEBI" id="CHEBI:190135"/>
    </cofactor>
    <text>Binds 1 [2Fe-2S] cluster.</text>
</comment>
<comment type="subcellular location">
    <subcellularLocation>
        <location>Plastid</location>
        <location>Chloroplast</location>
    </subcellularLocation>
</comment>
<comment type="similarity">
    <text evidence="2">Belongs to the 2Fe2S plant-type ferredoxin family.</text>
</comment>
<organism>
    <name type="scientific">Equisetum telmateia</name>
    <name type="common">Great horsetail</name>
    <name type="synonym">Equisetum majus</name>
    <dbReference type="NCBI Taxonomy" id="3260"/>
    <lineage>
        <taxon>Eukaryota</taxon>
        <taxon>Viridiplantae</taxon>
        <taxon>Streptophyta</taxon>
        <taxon>Embryophyta</taxon>
        <taxon>Tracheophyta</taxon>
        <taxon>Polypodiopsida</taxon>
        <taxon>Equisetidae</taxon>
        <taxon>Equisetales</taxon>
        <taxon>Equisetaceae</taxon>
        <taxon>Equisetum</taxon>
    </lineage>
</organism>
<proteinExistence type="evidence at protein level"/>
<feature type="chain" id="PRO_0000189331" description="Ferredoxin-2">
    <location>
        <begin position="1"/>
        <end position="93"/>
    </location>
</feature>
<feature type="domain" description="2Fe-2S ferredoxin-type" evidence="1">
    <location>
        <begin position="2"/>
        <end position="91"/>
    </location>
</feature>
<feature type="binding site" evidence="1">
    <location>
        <position position="37"/>
    </location>
    <ligand>
        <name>[2Fe-2S] cluster</name>
        <dbReference type="ChEBI" id="CHEBI:190135"/>
    </ligand>
</feature>
<feature type="binding site" evidence="1">
    <location>
        <position position="42"/>
    </location>
    <ligand>
        <name>[2Fe-2S] cluster</name>
        <dbReference type="ChEBI" id="CHEBI:190135"/>
    </ligand>
</feature>
<feature type="binding site" evidence="1">
    <location>
        <position position="45"/>
    </location>
    <ligand>
        <name>[2Fe-2S] cluster</name>
        <dbReference type="ChEBI" id="CHEBI:190135"/>
    </ligand>
</feature>
<feature type="binding site" evidence="1">
    <location>
        <position position="75"/>
    </location>
    <ligand>
        <name>[2Fe-2S] cluster</name>
        <dbReference type="ChEBI" id="CHEBI:190135"/>
    </ligand>
</feature>